<evidence type="ECO:0000250" key="1">
    <source>
        <dbReference type="UniProtKB" id="Q4WAW7"/>
    </source>
</evidence>
<evidence type="ECO:0000269" key="2">
    <source>
    </source>
</evidence>
<evidence type="ECO:0000269" key="3">
    <source>
    </source>
</evidence>
<evidence type="ECO:0000269" key="4">
    <source>
    </source>
</evidence>
<evidence type="ECO:0000269" key="5">
    <source>
    </source>
</evidence>
<evidence type="ECO:0000269" key="6">
    <source>
    </source>
</evidence>
<evidence type="ECO:0000269" key="7">
    <source>
    </source>
</evidence>
<evidence type="ECO:0000269" key="8">
    <source>
    </source>
</evidence>
<evidence type="ECO:0000303" key="9">
    <source>
    </source>
</evidence>
<evidence type="ECO:0000303" key="10">
    <source>
    </source>
</evidence>
<evidence type="ECO:0000305" key="11"/>
<evidence type="ECO:0000305" key="12">
    <source>
    </source>
</evidence>
<name>FTMB_ASPFM</name>
<proteinExistence type="evidence at protein level"/>
<keyword id="KW-0017">Alkaloid metabolism</keyword>
<keyword id="KW-0637">Prenyltransferase</keyword>
<keyword id="KW-0808">Transferase</keyword>
<keyword id="KW-0843">Virulence</keyword>
<comment type="function">
    <text evidence="2 3 4 5 6 7 8 11 12">Brevianamide F prenyltransferase; part of the gene cluster that mediates the biosynthesis of fumitremorgins, indole alkaloids that carry not only intriguing chemical structures, but also interesting biological and pharmacological activities (PubMed:16000710, PubMed:23649274). The biosynthesis of fumitremorgin-type alkaloids begins by condensation of the two amino acids L-tryptophan and L-proline to brevianamide F, catalyzed by the non-ribosomal peptide synthetase ftmA (PubMed:16755625). Brevianamide F is then prenylated by the prenyltransferase ftmPT1/ftmB in the presence of dimethylallyl diphosphate, resulting in the formation of tryprostatin B (PubMed:16000710, PubMed:23090579). The three cytochrome P450 monooxygenases, ftmP450-1/ftmC, ftmP450-2/ftmE and ftmP450-3/FtmG, are responsible for the conversion of tryprostatin B to 6-hydroxytryprostatin B, tryprostatin A to fumitremorgin C and fumitremorgin C to 12,13-dihydroxyfumitremorgin C, respectively (PubMed:19226505). The putative methyltransferase ftmMT/ftmD is expected for the conversion of 6-hydroxytryprostatin B to tryprostatin A (Probable). FtmPT2/FtmH catalyzes the prenylation of 12,13-dihydroxyfumitre-morgin C in the presence of dimethylallyl diphosphate, resulting in the formation of fumitremorgin B (PubMed:18683158). Fumitremorgin B is further converted to verruculogen by ftmOx1/ftmF via the insertion of an endoperoxide bond between the two prenyl moieties (PubMed:19763315). In some fungal species, verruculogen is further converted to fumitremorgin A, but the enzymes involved in this step have not been identified yet (Probable).</text>
</comment>
<comment type="catalytic activity">
    <reaction evidence="2">
        <text>brevianamide F + dimethylallyl diphosphate = tryprostatin B + diphosphate</text>
        <dbReference type="Rhea" id="RHEA:35939"/>
        <dbReference type="ChEBI" id="CHEBI:33019"/>
        <dbReference type="ChEBI" id="CHEBI:57623"/>
        <dbReference type="ChEBI" id="CHEBI:64530"/>
        <dbReference type="ChEBI" id="CHEBI:72760"/>
        <dbReference type="EC" id="2.5.1.106"/>
    </reaction>
</comment>
<comment type="biophysicochemical properties">
    <kinetics>
        <KM evidence="2">55 uM for brevianamide F</KM>
        <KM evidence="2">74 uM for dimethylallyl diphosphate</KM>
    </kinetics>
</comment>
<comment type="pathway">
    <text evidence="2 8">Mycotoxin biosynthesis.</text>
</comment>
<comment type="similarity">
    <text evidence="11">Belongs to the tryptophan dimethylallyltransferase family.</text>
</comment>
<dbReference type="EC" id="2.5.1.106" evidence="2"/>
<dbReference type="EMBL" id="AB436628">
    <property type="protein sequence ID" value="BAH23998.1"/>
    <property type="molecule type" value="Genomic_DNA"/>
</dbReference>
<dbReference type="SMR" id="B9WZX3"/>
<dbReference type="MEROPS" id="M77.004"/>
<dbReference type="GO" id="GO:0004659">
    <property type="term" value="F:prenyltransferase activity"/>
    <property type="evidence" value="ECO:0007669"/>
    <property type="project" value="UniProtKB-KW"/>
</dbReference>
<dbReference type="GO" id="GO:1902181">
    <property type="term" value="P:verruculogen biosynthetic process"/>
    <property type="evidence" value="ECO:0000314"/>
    <property type="project" value="GO_Central"/>
</dbReference>
<dbReference type="CDD" id="cd13929">
    <property type="entry name" value="PT-DMATS_CymD"/>
    <property type="match status" value="1"/>
</dbReference>
<dbReference type="InterPro" id="IPR033964">
    <property type="entry name" value="Aro_prenylTrfase"/>
</dbReference>
<dbReference type="InterPro" id="IPR017795">
    <property type="entry name" value="Aro_prenylTrfase_DMATS"/>
</dbReference>
<dbReference type="InterPro" id="IPR012148">
    <property type="entry name" value="DMATS-type_fun"/>
</dbReference>
<dbReference type="NCBIfam" id="TIGR03429">
    <property type="entry name" value="arom_pren_DMATS"/>
    <property type="match status" value="1"/>
</dbReference>
<dbReference type="PANTHER" id="PTHR40627">
    <property type="entry name" value="INDOLE PRENYLTRANSFERASE TDIB-RELATED"/>
    <property type="match status" value="1"/>
</dbReference>
<dbReference type="PANTHER" id="PTHR40627:SF3">
    <property type="entry name" value="PRENYLTRANSFERASE ASQH2-RELATED"/>
    <property type="match status" value="1"/>
</dbReference>
<dbReference type="Pfam" id="PF11991">
    <property type="entry name" value="Trp_DMAT"/>
    <property type="match status" value="1"/>
</dbReference>
<dbReference type="PIRSF" id="PIRSF000509">
    <property type="entry name" value="Trp_DMAT"/>
    <property type="match status" value="1"/>
</dbReference>
<dbReference type="SFLD" id="SFLDS00036">
    <property type="entry name" value="Aromatic_Prenyltransferase"/>
    <property type="match status" value="1"/>
</dbReference>
<dbReference type="SFLD" id="SFLDG01162">
    <property type="entry name" value="I"/>
    <property type="match status" value="1"/>
</dbReference>
<gene>
    <name evidence="9" type="primary">ftmPT1</name>
    <name evidence="10" type="synonym">ftmB</name>
</gene>
<sequence>MPPAPPDQKPCHQLQPAPYRALSESILFGSVDEERWWHSTAPILSRLLISSNYDVDVQYKYLSLYRHLVLPALGPYPQRDPETGIIATQWRSGMVLTGLPIEFSNNVARALIRIGVDPVTADSGTAQDPFNTTRPKVYLETAARLLPGVDLTRFYEFETELVITKAEEAVLQANPDLFRSPWKSQILTAMDLQKSGTVLVKAYFYPQPKSAVTGRSTEDLLVNAIRKVDREGRFETQLANLQRYIERRRRGLHVPGVTADKPPATAADKAFDACSFFPHFLSTDLVEPGKSRVKFYASERHVNLQMVEDIWTFGGLRRDPDALRGLELLRHFWADIQMREGYYTMPRGFCELGKSSAGFEAPMMFHFHLDGSQSPFPDPQMYVCVFGMNSRKLVEGLTTFYRRVGWEEMASHYQGNFLANYPDEDFEKAAHLCAYVSFAYKNGGAYVTLYNHSFNPVGDVSFPN</sequence>
<accession>B9WZX3</accession>
<reference key="1">
    <citation type="journal article" date="2009" name="ChemBioChem">
        <title>Identification of cytochrome P450s required for fumitremorgin biosynthesis in Aspergillus fumigatus.</title>
        <authorList>
            <person name="Kato N."/>
            <person name="Suzuki H."/>
            <person name="Takagi H."/>
            <person name="Asami Y."/>
            <person name="Kakeya H."/>
            <person name="Uramoto M."/>
            <person name="Usui T."/>
            <person name="Takahashi S."/>
            <person name="Sugimoto Y."/>
            <person name="Osada H."/>
        </authorList>
    </citation>
    <scope>NUCLEOTIDE SEQUENCE [GENOMIC DNA]</scope>
    <scope>FUNCTION</scope>
    <source>
        <strain>BM939</strain>
    </source>
</reference>
<reference key="2">
    <citation type="journal article" date="2005" name="Microbiology">
        <title>Overproduction, purification and characterization of FtmPT1, a brevianamide F prenyltransferase from Aspergillus fumigatus.</title>
        <authorList>
            <person name="Grundmann A."/>
            <person name="Li S.M."/>
        </authorList>
    </citation>
    <scope>FUNCTION</scope>
    <scope>CATALYTIC ACTIVITY</scope>
    <scope>BIOPHYSICOCHEMICAL PROPERTIES</scope>
    <scope>PATHWAY</scope>
</reference>
<reference key="3">
    <citation type="journal article" date="2006" name="ChemBioChem">
        <title>The fumitremorgin gene cluster of Aspergillus fumigatus: identification of a gene encoding brevianamide F synthetase.</title>
        <authorList>
            <person name="Maiya S."/>
            <person name="Grundmann A."/>
            <person name="Li S.M."/>
            <person name="Turner G."/>
        </authorList>
    </citation>
    <scope>FUNCTION</scope>
</reference>
<reference key="4">
    <citation type="journal article" date="2008" name="ChemBioChem">
        <title>FtmPT2, an N-prenyltransferase from Aspergillus fumigatus, catalyses the last step in the biosynthesis of fumitremorgin B.</title>
        <authorList>
            <person name="Grundmann A."/>
            <person name="Kuznetsova T."/>
            <person name="Afiyatullov S.S."/>
            <person name="Li S.M."/>
        </authorList>
    </citation>
    <scope>FUNCTION</scope>
</reference>
<reference key="5">
    <citation type="journal article" date="2009" name="Org. Biomol. Chem.">
        <title>FtmOx1, a non-heme Fe(II) and alpha-ketoglutarate-dependent dioxygenase, catalyses the endoperoxide formation of verruculogen in Aspergillus fumigatus.</title>
        <authorList>
            <person name="Steffan N."/>
            <person name="Grundmann A."/>
            <person name="Afiyatullov S."/>
            <person name="Ruan H."/>
            <person name="Li S.M."/>
        </authorList>
    </citation>
    <scope>FUNCTION</scope>
</reference>
<reference key="6">
    <citation type="journal article" date="2012" name="Org. Biomol. Chem.">
        <title>Breaking the regioselectivity of indole prenyltransferases: identification of regular C3-prenylated hexahydropyrrolo[2,3-b]indoles as side products of the regular C2-prenyltransferase FtmPT1.</title>
        <authorList>
            <person name="Wollinsky B."/>
            <person name="Ludwig L."/>
            <person name="Xie X."/>
            <person name="Li S.M."/>
        </authorList>
    </citation>
    <scope>FUNCTION</scope>
</reference>
<reference key="7">
    <citation type="journal article" date="2013" name="Biosci. Biotechnol. Biochem.">
        <title>A point mutation in ftmD blocks the fumitremorgin biosynthetic pathway in Aspergillus fumigatus strain Af293.</title>
        <authorList>
            <person name="Kato N."/>
            <person name="Suzuki H."/>
            <person name="Okumura H."/>
            <person name="Takahashi S."/>
            <person name="Osada H."/>
        </authorList>
    </citation>
    <scope>FUNCTION</scope>
    <scope>PATHWAY</scope>
</reference>
<protein>
    <recommendedName>
        <fullName evidence="9">Tryprostatin B synthase</fullName>
        <ecNumber evidence="2">2.5.1.106</ecNumber>
    </recommendedName>
    <alternativeName>
        <fullName evidence="9">Brevianamide F prenyltransferase</fullName>
    </alternativeName>
    <alternativeName>
        <fullName evidence="10">Fumitremorgin biosynthesis protein B</fullName>
    </alternativeName>
</protein>
<organism>
    <name type="scientific">Aspergillus fumigatus</name>
    <name type="common">Neosartorya fumigata</name>
    <dbReference type="NCBI Taxonomy" id="746128"/>
    <lineage>
        <taxon>Eukaryota</taxon>
        <taxon>Fungi</taxon>
        <taxon>Dikarya</taxon>
        <taxon>Ascomycota</taxon>
        <taxon>Pezizomycotina</taxon>
        <taxon>Eurotiomycetes</taxon>
        <taxon>Eurotiomycetidae</taxon>
        <taxon>Eurotiales</taxon>
        <taxon>Aspergillaceae</taxon>
        <taxon>Aspergillus</taxon>
        <taxon>Aspergillus subgen. Fumigati</taxon>
    </lineage>
</organism>
<feature type="chain" id="PRO_0000424112" description="Tryprostatin B synthase">
    <location>
        <begin position="1"/>
        <end position="464"/>
    </location>
</feature>
<feature type="binding site" evidence="1">
    <location>
        <position position="94"/>
    </location>
    <ligand>
        <name>brevianamide F</name>
        <dbReference type="ChEBI" id="CHEBI:64530"/>
    </ligand>
</feature>
<feature type="binding site" evidence="1">
    <location>
        <position position="102"/>
    </location>
    <ligand>
        <name>brevianamide F</name>
        <dbReference type="ChEBI" id="CHEBI:64530"/>
    </ligand>
</feature>
<feature type="binding site" evidence="1">
    <location>
        <position position="113"/>
    </location>
    <ligand>
        <name>dimethylallyl diphosphate</name>
        <dbReference type="ChEBI" id="CHEBI:57623"/>
    </ligand>
</feature>
<feature type="binding site" evidence="1">
    <location>
        <position position="201"/>
    </location>
    <ligand>
        <name>dimethylallyl diphosphate</name>
        <dbReference type="ChEBI" id="CHEBI:57623"/>
    </ligand>
</feature>
<feature type="binding site" evidence="1">
    <location>
        <position position="203"/>
    </location>
    <ligand>
        <name>dimethylallyl diphosphate</name>
        <dbReference type="ChEBI" id="CHEBI:57623"/>
    </ligand>
</feature>
<feature type="binding site" evidence="1">
    <location>
        <position position="205"/>
    </location>
    <ligand>
        <name>brevianamide F</name>
        <dbReference type="ChEBI" id="CHEBI:64530"/>
    </ligand>
</feature>
<feature type="binding site" evidence="1">
    <location>
        <position position="294"/>
    </location>
    <ligand>
        <name>dimethylallyl diphosphate</name>
        <dbReference type="ChEBI" id="CHEBI:57623"/>
    </ligand>
</feature>
<feature type="binding site" evidence="1">
    <location>
        <position position="296"/>
    </location>
    <ligand>
        <name>dimethylallyl diphosphate</name>
        <dbReference type="ChEBI" id="CHEBI:57623"/>
    </ligand>
</feature>
<feature type="binding site" evidence="1">
    <location>
        <position position="380"/>
    </location>
    <ligand>
        <name>dimethylallyl diphosphate</name>
        <dbReference type="ChEBI" id="CHEBI:57623"/>
    </ligand>
</feature>
<feature type="binding site" evidence="1">
    <location>
        <position position="382"/>
    </location>
    <ligand>
        <name>dimethylallyl diphosphate</name>
        <dbReference type="ChEBI" id="CHEBI:57623"/>
    </ligand>
</feature>
<feature type="binding site" evidence="1">
    <location>
        <position position="446"/>
    </location>
    <ligand>
        <name>dimethylallyl diphosphate</name>
        <dbReference type="ChEBI" id="CHEBI:57623"/>
    </ligand>
</feature>
<feature type="binding site" evidence="1">
    <location>
        <position position="450"/>
    </location>
    <ligand>
        <name>dimethylallyl diphosphate</name>
        <dbReference type="ChEBI" id="CHEBI:57623"/>
    </ligand>
</feature>
<feature type="site" description="Required for regioselectivity" evidence="1">
    <location>
        <position position="115"/>
    </location>
</feature>